<accession>Q49649</accession>
<comment type="cofactor">
    <cofactor evidence="1">
        <name>Zn(2+)</name>
        <dbReference type="ChEBI" id="CHEBI:29105"/>
    </cofactor>
    <text evidence="1">Binds 2 Zn(2+) ions per subunit.</text>
</comment>
<comment type="similarity">
    <text evidence="2">Belongs to the metallo-beta-lactamase superfamily. Glyoxalase II family.</text>
</comment>
<gene>
    <name type="ordered locus">ML0493</name>
    <name type="ORF">B1177_C3_247</name>
    <name type="ORF">MLCB1259.11</name>
</gene>
<sequence>MLITGFPAGMLQCNCYVLADRAGTDAVIVDPGQRAMGPLRRILDENRLTPSAVLLTHGHIDHMWSAQKVSDTYGCPTYIHPEDRFMLTDPLFGFGPRVAQVVTGAFFREPKQVVELDRDGDKLDLGSVTVNVDHTPGHTRGSVCFWVAADTDVVLTGDTLFERTIGRTDLFGGSGRDLYRSIVEKLLVLDDKTVVLPGHGNSTTIGAERRFNPFLEGL</sequence>
<proteinExistence type="inferred from homology"/>
<protein>
    <recommendedName>
        <fullName>Uncharacterized protein ML0493</fullName>
        <ecNumber>3.-.-.-</ecNumber>
    </recommendedName>
</protein>
<dbReference type="EC" id="3.-.-.-"/>
<dbReference type="EMBL" id="U00011">
    <property type="protein sequence ID" value="AAA17102.1"/>
    <property type="molecule type" value="Genomic_DNA"/>
</dbReference>
<dbReference type="EMBL" id="AL023591">
    <property type="protein sequence ID" value="CAA19086.1"/>
    <property type="molecule type" value="Genomic_DNA"/>
</dbReference>
<dbReference type="EMBL" id="AL583918">
    <property type="protein sequence ID" value="CAC30001.1"/>
    <property type="molecule type" value="Genomic_DNA"/>
</dbReference>
<dbReference type="PIR" id="S72738">
    <property type="entry name" value="S72738"/>
</dbReference>
<dbReference type="RefSeq" id="NP_301432.1">
    <property type="nucleotide sequence ID" value="NC_002677.1"/>
</dbReference>
<dbReference type="RefSeq" id="WP_010907756.1">
    <property type="nucleotide sequence ID" value="NC_002677.1"/>
</dbReference>
<dbReference type="SMR" id="Q49649"/>
<dbReference type="STRING" id="272631.gene:17574314"/>
<dbReference type="KEGG" id="mle:ML0493"/>
<dbReference type="PATRIC" id="fig|272631.5.peg.857"/>
<dbReference type="Leproma" id="ML0493"/>
<dbReference type="eggNOG" id="COG0491">
    <property type="taxonomic scope" value="Bacteria"/>
</dbReference>
<dbReference type="HOGENOM" id="CLU_030571_5_0_11"/>
<dbReference type="OrthoDB" id="9802991at2"/>
<dbReference type="Proteomes" id="UP000000806">
    <property type="component" value="Chromosome"/>
</dbReference>
<dbReference type="GO" id="GO:0016787">
    <property type="term" value="F:hydrolase activity"/>
    <property type="evidence" value="ECO:0007669"/>
    <property type="project" value="UniProtKB-KW"/>
</dbReference>
<dbReference type="GO" id="GO:0046872">
    <property type="term" value="F:metal ion binding"/>
    <property type="evidence" value="ECO:0007669"/>
    <property type="project" value="UniProtKB-KW"/>
</dbReference>
<dbReference type="CDD" id="cd06262">
    <property type="entry name" value="metallo-hydrolase-like_MBL-fold"/>
    <property type="match status" value="1"/>
</dbReference>
<dbReference type="Gene3D" id="3.60.15.10">
    <property type="entry name" value="Ribonuclease Z/Hydroxyacylglutathione hydrolase-like"/>
    <property type="match status" value="1"/>
</dbReference>
<dbReference type="InterPro" id="IPR051453">
    <property type="entry name" value="MBL_Glyoxalase_II"/>
</dbReference>
<dbReference type="InterPro" id="IPR001279">
    <property type="entry name" value="Metallo-B-lactamas"/>
</dbReference>
<dbReference type="InterPro" id="IPR036866">
    <property type="entry name" value="RibonucZ/Hydroxyglut_hydro"/>
</dbReference>
<dbReference type="PANTHER" id="PTHR46233">
    <property type="entry name" value="HYDROXYACYLGLUTATHIONE HYDROLASE GLOC"/>
    <property type="match status" value="1"/>
</dbReference>
<dbReference type="PANTHER" id="PTHR46233:SF3">
    <property type="entry name" value="HYDROXYACYLGLUTATHIONE HYDROLASE GLOC"/>
    <property type="match status" value="1"/>
</dbReference>
<dbReference type="Pfam" id="PF00753">
    <property type="entry name" value="Lactamase_B"/>
    <property type="match status" value="1"/>
</dbReference>
<dbReference type="SMART" id="SM00849">
    <property type="entry name" value="Lactamase_B"/>
    <property type="match status" value="1"/>
</dbReference>
<dbReference type="SUPFAM" id="SSF56281">
    <property type="entry name" value="Metallo-hydrolase/oxidoreductase"/>
    <property type="match status" value="1"/>
</dbReference>
<evidence type="ECO:0000250" key="1">
    <source>
        <dbReference type="UniProtKB" id="Q16775"/>
    </source>
</evidence>
<evidence type="ECO:0000305" key="2"/>
<feature type="chain" id="PRO_0000192363" description="Uncharacterized protein ML0493">
    <location>
        <begin position="1"/>
        <end position="218"/>
    </location>
</feature>
<feature type="binding site" evidence="1">
    <location>
        <position position="57"/>
    </location>
    <ligand>
        <name>Zn(2+)</name>
        <dbReference type="ChEBI" id="CHEBI:29105"/>
        <label>1</label>
    </ligand>
</feature>
<feature type="binding site" evidence="1">
    <location>
        <position position="59"/>
    </location>
    <ligand>
        <name>Zn(2+)</name>
        <dbReference type="ChEBI" id="CHEBI:29105"/>
        <label>1</label>
    </ligand>
</feature>
<feature type="binding site" evidence="1">
    <location>
        <position position="61"/>
    </location>
    <ligand>
        <name>Zn(2+)</name>
        <dbReference type="ChEBI" id="CHEBI:29105"/>
        <label>2</label>
    </ligand>
</feature>
<feature type="binding site" evidence="1">
    <location>
        <position position="62"/>
    </location>
    <ligand>
        <name>Zn(2+)</name>
        <dbReference type="ChEBI" id="CHEBI:29105"/>
        <label>2</label>
    </ligand>
</feature>
<feature type="binding site" evidence="1">
    <location>
        <position position="138"/>
    </location>
    <ligand>
        <name>Zn(2+)</name>
        <dbReference type="ChEBI" id="CHEBI:29105"/>
        <label>1</label>
    </ligand>
</feature>
<feature type="binding site" evidence="1">
    <location>
        <position position="158"/>
    </location>
    <ligand>
        <name>Zn(2+)</name>
        <dbReference type="ChEBI" id="CHEBI:29105"/>
        <label>1</label>
    </ligand>
</feature>
<feature type="binding site" evidence="1">
    <location>
        <position position="158"/>
    </location>
    <ligand>
        <name>Zn(2+)</name>
        <dbReference type="ChEBI" id="CHEBI:29105"/>
        <label>2</label>
    </ligand>
</feature>
<feature type="binding site" evidence="1">
    <location>
        <position position="199"/>
    </location>
    <ligand>
        <name>Zn(2+)</name>
        <dbReference type="ChEBI" id="CHEBI:29105"/>
        <label>2</label>
    </ligand>
</feature>
<reference key="1">
    <citation type="submission" date="1994-03" db="EMBL/GenBank/DDBJ databases">
        <authorList>
            <person name="Smith D.R."/>
            <person name="Robison K."/>
        </authorList>
    </citation>
    <scope>NUCLEOTIDE SEQUENCE [GENOMIC DNA]</scope>
</reference>
<reference key="2">
    <citation type="journal article" date="2001" name="Nature">
        <title>Massive gene decay in the leprosy bacillus.</title>
        <authorList>
            <person name="Cole S.T."/>
            <person name="Eiglmeier K."/>
            <person name="Parkhill J."/>
            <person name="James K.D."/>
            <person name="Thomson N.R."/>
            <person name="Wheeler P.R."/>
            <person name="Honore N."/>
            <person name="Garnier T."/>
            <person name="Churcher C.M."/>
            <person name="Harris D.E."/>
            <person name="Mungall K.L."/>
            <person name="Basham D."/>
            <person name="Brown D."/>
            <person name="Chillingworth T."/>
            <person name="Connor R."/>
            <person name="Davies R.M."/>
            <person name="Devlin K."/>
            <person name="Duthoy S."/>
            <person name="Feltwell T."/>
            <person name="Fraser A."/>
            <person name="Hamlin N."/>
            <person name="Holroyd S."/>
            <person name="Hornsby T."/>
            <person name="Jagels K."/>
            <person name="Lacroix C."/>
            <person name="Maclean J."/>
            <person name="Moule S."/>
            <person name="Murphy L.D."/>
            <person name="Oliver K."/>
            <person name="Quail M.A."/>
            <person name="Rajandream M.A."/>
            <person name="Rutherford K.M."/>
            <person name="Rutter S."/>
            <person name="Seeger K."/>
            <person name="Simon S."/>
            <person name="Simmonds M."/>
            <person name="Skelton J."/>
            <person name="Squares R."/>
            <person name="Squares S."/>
            <person name="Stevens K."/>
            <person name="Taylor K."/>
            <person name="Whitehead S."/>
            <person name="Woodward J.R."/>
            <person name="Barrell B.G."/>
        </authorList>
    </citation>
    <scope>NUCLEOTIDE SEQUENCE [LARGE SCALE GENOMIC DNA]</scope>
    <source>
        <strain>TN</strain>
    </source>
</reference>
<organism>
    <name type="scientific">Mycobacterium leprae (strain TN)</name>
    <dbReference type="NCBI Taxonomy" id="272631"/>
    <lineage>
        <taxon>Bacteria</taxon>
        <taxon>Bacillati</taxon>
        <taxon>Actinomycetota</taxon>
        <taxon>Actinomycetes</taxon>
        <taxon>Mycobacteriales</taxon>
        <taxon>Mycobacteriaceae</taxon>
        <taxon>Mycobacterium</taxon>
    </lineage>
</organism>
<name>Y493_MYCLE</name>
<keyword id="KW-0378">Hydrolase</keyword>
<keyword id="KW-0479">Metal-binding</keyword>
<keyword id="KW-1185">Reference proteome</keyword>
<keyword id="KW-0862">Zinc</keyword>